<accession>A9MN52</accession>
<protein>
    <recommendedName>
        <fullName evidence="1">Small ribosomal subunit protein uS19</fullName>
    </recommendedName>
    <alternativeName>
        <fullName evidence="2">30S ribosomal protein S19</fullName>
    </alternativeName>
</protein>
<evidence type="ECO:0000255" key="1">
    <source>
        <dbReference type="HAMAP-Rule" id="MF_00531"/>
    </source>
</evidence>
<evidence type="ECO:0000305" key="2"/>
<feature type="chain" id="PRO_1000081790" description="Small ribosomal subunit protein uS19">
    <location>
        <begin position="1"/>
        <end position="92"/>
    </location>
</feature>
<comment type="function">
    <text evidence="1">Protein S19 forms a complex with S13 that binds strongly to the 16S ribosomal RNA.</text>
</comment>
<comment type="similarity">
    <text evidence="1">Belongs to the universal ribosomal protein uS19 family.</text>
</comment>
<organism>
    <name type="scientific">Salmonella arizonae (strain ATCC BAA-731 / CDC346-86 / RSK2980)</name>
    <dbReference type="NCBI Taxonomy" id="41514"/>
    <lineage>
        <taxon>Bacteria</taxon>
        <taxon>Pseudomonadati</taxon>
        <taxon>Pseudomonadota</taxon>
        <taxon>Gammaproteobacteria</taxon>
        <taxon>Enterobacterales</taxon>
        <taxon>Enterobacteriaceae</taxon>
        <taxon>Salmonella</taxon>
    </lineage>
</organism>
<proteinExistence type="inferred from homology"/>
<keyword id="KW-1185">Reference proteome</keyword>
<keyword id="KW-0687">Ribonucleoprotein</keyword>
<keyword id="KW-0689">Ribosomal protein</keyword>
<keyword id="KW-0694">RNA-binding</keyword>
<keyword id="KW-0699">rRNA-binding</keyword>
<name>RS19_SALAR</name>
<reference key="1">
    <citation type="submission" date="2007-11" db="EMBL/GenBank/DDBJ databases">
        <authorList>
            <consortium name="The Salmonella enterica serovar Arizonae Genome Sequencing Project"/>
            <person name="McClelland M."/>
            <person name="Sanderson E.K."/>
            <person name="Porwollik S."/>
            <person name="Spieth J."/>
            <person name="Clifton W.S."/>
            <person name="Fulton R."/>
            <person name="Chunyan W."/>
            <person name="Wollam A."/>
            <person name="Shah N."/>
            <person name="Pepin K."/>
            <person name="Bhonagiri V."/>
            <person name="Nash W."/>
            <person name="Johnson M."/>
            <person name="Thiruvilangam P."/>
            <person name="Wilson R."/>
        </authorList>
    </citation>
    <scope>NUCLEOTIDE SEQUENCE [LARGE SCALE GENOMIC DNA]</scope>
    <source>
        <strain>ATCC BAA-731 / CDC346-86 / RSK2980</strain>
    </source>
</reference>
<gene>
    <name evidence="1" type="primary">rpsS</name>
    <name type="ordered locus">SARI_04192</name>
</gene>
<dbReference type="EMBL" id="CP000880">
    <property type="protein sequence ID" value="ABX23981.1"/>
    <property type="molecule type" value="Genomic_DNA"/>
</dbReference>
<dbReference type="SMR" id="A9MN52"/>
<dbReference type="STRING" id="41514.SARI_04192"/>
<dbReference type="KEGG" id="ses:SARI_04192"/>
<dbReference type="HOGENOM" id="CLU_144911_0_1_6"/>
<dbReference type="Proteomes" id="UP000002084">
    <property type="component" value="Chromosome"/>
</dbReference>
<dbReference type="GO" id="GO:0005737">
    <property type="term" value="C:cytoplasm"/>
    <property type="evidence" value="ECO:0007669"/>
    <property type="project" value="UniProtKB-ARBA"/>
</dbReference>
<dbReference type="GO" id="GO:0015935">
    <property type="term" value="C:small ribosomal subunit"/>
    <property type="evidence" value="ECO:0007669"/>
    <property type="project" value="InterPro"/>
</dbReference>
<dbReference type="GO" id="GO:0019843">
    <property type="term" value="F:rRNA binding"/>
    <property type="evidence" value="ECO:0007669"/>
    <property type="project" value="UniProtKB-UniRule"/>
</dbReference>
<dbReference type="GO" id="GO:0003735">
    <property type="term" value="F:structural constituent of ribosome"/>
    <property type="evidence" value="ECO:0007669"/>
    <property type="project" value="InterPro"/>
</dbReference>
<dbReference type="GO" id="GO:0000028">
    <property type="term" value="P:ribosomal small subunit assembly"/>
    <property type="evidence" value="ECO:0007669"/>
    <property type="project" value="TreeGrafter"/>
</dbReference>
<dbReference type="GO" id="GO:0006412">
    <property type="term" value="P:translation"/>
    <property type="evidence" value="ECO:0007669"/>
    <property type="project" value="UniProtKB-UniRule"/>
</dbReference>
<dbReference type="FunFam" id="3.30.860.10:FF:000001">
    <property type="entry name" value="30S ribosomal protein S19"/>
    <property type="match status" value="1"/>
</dbReference>
<dbReference type="Gene3D" id="3.30.860.10">
    <property type="entry name" value="30s Ribosomal Protein S19, Chain A"/>
    <property type="match status" value="1"/>
</dbReference>
<dbReference type="HAMAP" id="MF_00531">
    <property type="entry name" value="Ribosomal_uS19"/>
    <property type="match status" value="1"/>
</dbReference>
<dbReference type="InterPro" id="IPR002222">
    <property type="entry name" value="Ribosomal_uS19"/>
</dbReference>
<dbReference type="InterPro" id="IPR005732">
    <property type="entry name" value="Ribosomal_uS19_bac-type"/>
</dbReference>
<dbReference type="InterPro" id="IPR020934">
    <property type="entry name" value="Ribosomal_uS19_CS"/>
</dbReference>
<dbReference type="InterPro" id="IPR023575">
    <property type="entry name" value="Ribosomal_uS19_SF"/>
</dbReference>
<dbReference type="NCBIfam" id="TIGR01050">
    <property type="entry name" value="rpsS_bact"/>
    <property type="match status" value="1"/>
</dbReference>
<dbReference type="PANTHER" id="PTHR11880">
    <property type="entry name" value="RIBOSOMAL PROTEIN S19P FAMILY MEMBER"/>
    <property type="match status" value="1"/>
</dbReference>
<dbReference type="PANTHER" id="PTHR11880:SF8">
    <property type="entry name" value="SMALL RIBOSOMAL SUBUNIT PROTEIN US19M"/>
    <property type="match status" value="1"/>
</dbReference>
<dbReference type="Pfam" id="PF00203">
    <property type="entry name" value="Ribosomal_S19"/>
    <property type="match status" value="1"/>
</dbReference>
<dbReference type="PIRSF" id="PIRSF002144">
    <property type="entry name" value="Ribosomal_S19"/>
    <property type="match status" value="1"/>
</dbReference>
<dbReference type="PRINTS" id="PR00975">
    <property type="entry name" value="RIBOSOMALS19"/>
</dbReference>
<dbReference type="SUPFAM" id="SSF54570">
    <property type="entry name" value="Ribosomal protein S19"/>
    <property type="match status" value="1"/>
</dbReference>
<dbReference type="PROSITE" id="PS00323">
    <property type="entry name" value="RIBOSOMAL_S19"/>
    <property type="match status" value="1"/>
</dbReference>
<sequence>MPRSLKKGPFIDLHLLKKVEKAVESGDKKPLRTWSRRSTIFPNMIGLTIAVHNGRQHVPVFVSDEMVGHKLGEFAPTRTYRGHAADKKAKKK</sequence>